<evidence type="ECO:0000255" key="1">
    <source>
        <dbReference type="HAMAP-Rule" id="MF_01929"/>
    </source>
</evidence>
<name>PURE_MYCLE</name>
<dbReference type="EC" id="5.4.99.18" evidence="1"/>
<dbReference type="EMBL" id="U00012">
    <property type="protein sequence ID" value="AAA85943.1"/>
    <property type="molecule type" value="Genomic_DNA"/>
</dbReference>
<dbReference type="EMBL" id="AL583919">
    <property type="protein sequence ID" value="CAC30245.1"/>
    <property type="molecule type" value="Genomic_DNA"/>
</dbReference>
<dbReference type="PIR" id="A87001">
    <property type="entry name" value="A87001"/>
</dbReference>
<dbReference type="RefSeq" id="NP_301576.1">
    <property type="nucleotide sequence ID" value="NC_002677.1"/>
</dbReference>
<dbReference type="RefSeq" id="WP_010907900.1">
    <property type="nucleotide sequence ID" value="NC_002677.1"/>
</dbReference>
<dbReference type="SMR" id="P46702"/>
<dbReference type="STRING" id="272631.gene:17574560"/>
<dbReference type="KEGG" id="mle:ML0736"/>
<dbReference type="PATRIC" id="fig|272631.5.peg.1333"/>
<dbReference type="Leproma" id="ML0736"/>
<dbReference type="eggNOG" id="COG0041">
    <property type="taxonomic scope" value="Bacteria"/>
</dbReference>
<dbReference type="HOGENOM" id="CLU_094982_2_2_11"/>
<dbReference type="OrthoDB" id="9791908at2"/>
<dbReference type="UniPathway" id="UPA00074">
    <property type="reaction ID" value="UER00943"/>
</dbReference>
<dbReference type="Proteomes" id="UP000000806">
    <property type="component" value="Chromosome"/>
</dbReference>
<dbReference type="GO" id="GO:0034023">
    <property type="term" value="F:5-(carboxyamino)imidazole ribonucleotide mutase activity"/>
    <property type="evidence" value="ECO:0007669"/>
    <property type="project" value="UniProtKB-UniRule"/>
</dbReference>
<dbReference type="GO" id="GO:0006189">
    <property type="term" value="P:'de novo' IMP biosynthetic process"/>
    <property type="evidence" value="ECO:0007669"/>
    <property type="project" value="UniProtKB-UniRule"/>
</dbReference>
<dbReference type="Gene3D" id="3.40.50.1970">
    <property type="match status" value="1"/>
</dbReference>
<dbReference type="HAMAP" id="MF_01929">
    <property type="entry name" value="PurE_classI"/>
    <property type="match status" value="1"/>
</dbReference>
<dbReference type="InterPro" id="IPR033747">
    <property type="entry name" value="PurE_ClassI"/>
</dbReference>
<dbReference type="InterPro" id="IPR000031">
    <property type="entry name" value="PurE_dom"/>
</dbReference>
<dbReference type="InterPro" id="IPR024694">
    <property type="entry name" value="PurE_prokaryotes"/>
</dbReference>
<dbReference type="NCBIfam" id="TIGR01162">
    <property type="entry name" value="purE"/>
    <property type="match status" value="1"/>
</dbReference>
<dbReference type="PANTHER" id="PTHR23046:SF2">
    <property type="entry name" value="PHOSPHORIBOSYLAMINOIMIDAZOLE CARBOXYLASE"/>
    <property type="match status" value="1"/>
</dbReference>
<dbReference type="PANTHER" id="PTHR23046">
    <property type="entry name" value="PHOSPHORIBOSYLAMINOIMIDAZOLE CARBOXYLASE CATALYTIC SUBUNIT"/>
    <property type="match status" value="1"/>
</dbReference>
<dbReference type="Pfam" id="PF00731">
    <property type="entry name" value="AIRC"/>
    <property type="match status" value="1"/>
</dbReference>
<dbReference type="PIRSF" id="PIRSF001338">
    <property type="entry name" value="AIR_carboxylase"/>
    <property type="match status" value="1"/>
</dbReference>
<dbReference type="SMART" id="SM01001">
    <property type="entry name" value="AIRC"/>
    <property type="match status" value="1"/>
</dbReference>
<dbReference type="SUPFAM" id="SSF52255">
    <property type="entry name" value="N5-CAIR mutase (phosphoribosylaminoimidazole carboxylase, PurE)"/>
    <property type="match status" value="1"/>
</dbReference>
<feature type="chain" id="PRO_0000074976" description="N5-carboxyaminoimidazole ribonucleotide mutase">
    <location>
        <begin position="1"/>
        <end position="171"/>
    </location>
</feature>
<feature type="binding site" evidence="1">
    <location>
        <position position="13"/>
    </location>
    <ligand>
        <name>substrate</name>
    </ligand>
</feature>
<feature type="binding site" evidence="1">
    <location>
        <position position="16"/>
    </location>
    <ligand>
        <name>substrate</name>
    </ligand>
</feature>
<feature type="binding site" evidence="1">
    <location>
        <position position="43"/>
    </location>
    <ligand>
        <name>substrate</name>
    </ligand>
</feature>
<keyword id="KW-0413">Isomerase</keyword>
<keyword id="KW-0658">Purine biosynthesis</keyword>
<keyword id="KW-1185">Reference proteome</keyword>
<organism>
    <name type="scientific">Mycobacterium leprae (strain TN)</name>
    <dbReference type="NCBI Taxonomy" id="272631"/>
    <lineage>
        <taxon>Bacteria</taxon>
        <taxon>Bacillati</taxon>
        <taxon>Actinomycetota</taxon>
        <taxon>Actinomycetes</taxon>
        <taxon>Mycobacteriales</taxon>
        <taxon>Mycobacteriaceae</taxon>
        <taxon>Mycobacterium</taxon>
    </lineage>
</organism>
<gene>
    <name evidence="1" type="primary">purE</name>
    <name type="ordered locus">ML0736</name>
    <name type="ORF">B1308_F3_98</name>
</gene>
<protein>
    <recommendedName>
        <fullName evidence="1">N5-carboxyaminoimidazole ribonucleotide mutase</fullName>
        <shortName evidence="1">N5-CAIR mutase</shortName>
        <ecNumber evidence="1">5.4.99.18</ecNumber>
    </recommendedName>
    <alternativeName>
        <fullName evidence="1">5-(carboxyamino)imidazole ribonucleotide mutase</fullName>
    </alternativeName>
</protein>
<accession>P46702</accession>
<sequence length="171" mass="17912">MTRQPRVGVIMGSDSDWSVMQDAAHALAEFDIPIEVRVVSAHRTPAEMFDYARNAVDRSIAVIIAGAGGAAHLPGMVASATPLPVIGVPVPLARLDGLDSLLSIVQMPAGVPVATVSIGGARNAGLLAVRILGSSDLQLRAQLVAFQDRLADTVRAKDADLQRFRGKLIGD</sequence>
<proteinExistence type="inferred from homology"/>
<reference key="1">
    <citation type="journal article" date="1995" name="Gene">
        <title>Genomic organization of the mycobacterial sigma gene cluster.</title>
        <authorList>
            <person name="Doukhan L."/>
            <person name="Predich M."/>
            <person name="Nair G."/>
            <person name="Dussurget O."/>
            <person name="Mandic-Mulec I."/>
            <person name="Cole S.T."/>
            <person name="Smith D.R."/>
            <person name="Smith I."/>
        </authorList>
    </citation>
    <scope>NUCLEOTIDE SEQUENCE [GENOMIC DNA]</scope>
</reference>
<reference key="2">
    <citation type="journal article" date="2001" name="Nature">
        <title>Massive gene decay in the leprosy bacillus.</title>
        <authorList>
            <person name="Cole S.T."/>
            <person name="Eiglmeier K."/>
            <person name="Parkhill J."/>
            <person name="James K.D."/>
            <person name="Thomson N.R."/>
            <person name="Wheeler P.R."/>
            <person name="Honore N."/>
            <person name="Garnier T."/>
            <person name="Churcher C.M."/>
            <person name="Harris D.E."/>
            <person name="Mungall K.L."/>
            <person name="Basham D."/>
            <person name="Brown D."/>
            <person name="Chillingworth T."/>
            <person name="Connor R."/>
            <person name="Davies R.M."/>
            <person name="Devlin K."/>
            <person name="Duthoy S."/>
            <person name="Feltwell T."/>
            <person name="Fraser A."/>
            <person name="Hamlin N."/>
            <person name="Holroyd S."/>
            <person name="Hornsby T."/>
            <person name="Jagels K."/>
            <person name="Lacroix C."/>
            <person name="Maclean J."/>
            <person name="Moule S."/>
            <person name="Murphy L.D."/>
            <person name="Oliver K."/>
            <person name="Quail M.A."/>
            <person name="Rajandream M.A."/>
            <person name="Rutherford K.M."/>
            <person name="Rutter S."/>
            <person name="Seeger K."/>
            <person name="Simon S."/>
            <person name="Simmonds M."/>
            <person name="Skelton J."/>
            <person name="Squares R."/>
            <person name="Squares S."/>
            <person name="Stevens K."/>
            <person name="Taylor K."/>
            <person name="Whitehead S."/>
            <person name="Woodward J.R."/>
            <person name="Barrell B.G."/>
        </authorList>
    </citation>
    <scope>NUCLEOTIDE SEQUENCE [LARGE SCALE GENOMIC DNA]</scope>
    <source>
        <strain>TN</strain>
    </source>
</reference>
<comment type="function">
    <text evidence="1">Catalyzes the conversion of N5-carboxyaminoimidazole ribonucleotide (N5-CAIR) to 4-carboxy-5-aminoimidazole ribonucleotide (CAIR).</text>
</comment>
<comment type="catalytic activity">
    <reaction evidence="1">
        <text>5-carboxyamino-1-(5-phospho-D-ribosyl)imidazole + H(+) = 5-amino-1-(5-phospho-D-ribosyl)imidazole-4-carboxylate</text>
        <dbReference type="Rhea" id="RHEA:13193"/>
        <dbReference type="ChEBI" id="CHEBI:15378"/>
        <dbReference type="ChEBI" id="CHEBI:58730"/>
        <dbReference type="ChEBI" id="CHEBI:77657"/>
        <dbReference type="EC" id="5.4.99.18"/>
    </reaction>
</comment>
<comment type="pathway">
    <text evidence="1">Purine metabolism; IMP biosynthesis via de novo pathway; 5-amino-1-(5-phospho-D-ribosyl)imidazole-4-carboxylate from 5-amino-1-(5-phospho-D-ribosyl)imidazole (N5-CAIR route): step 2/2.</text>
</comment>
<comment type="similarity">
    <text evidence="1">Belongs to the AIR carboxylase family. Class I subfamily.</text>
</comment>